<keyword id="KW-0903">Direct protein sequencing</keyword>
<keyword id="KW-1015">Disulfide bond</keyword>
<keyword id="KW-0325">Glycoprotein</keyword>
<keyword id="KW-0326">Glycosidase</keyword>
<keyword id="KW-0378">Hydrolase</keyword>
<keyword id="KW-0438">Lignin biosynthesis</keyword>
<keyword id="KW-0732">Signal</keyword>
<comment type="function">
    <text>Involved in the release of monolignols for lignin biosynthesis. Unable to hydrolyze 4-nitrophenyl beta-cellobioside or alpha-linked methylumbelliferyl glucoside.</text>
</comment>
<comment type="catalytic activity">
    <reaction evidence="5 6">
        <text>4-O-(beta-D-glucosyl)-(E)-coniferol + H2O = (E)-coniferol + D-glucose</text>
        <dbReference type="Rhea" id="RHEA:12252"/>
        <dbReference type="ChEBI" id="CHEBI:4167"/>
        <dbReference type="ChEBI" id="CHEBI:15377"/>
        <dbReference type="ChEBI" id="CHEBI:16220"/>
        <dbReference type="ChEBI" id="CHEBI:17745"/>
        <dbReference type="EC" id="3.2.1.126"/>
    </reaction>
</comment>
<comment type="activity regulation">
    <text evidence="6">Inhibited by glucono-1,5-lactone, but not by bromoconduritol or conduritol B epoxide.</text>
</comment>
<comment type="biophysicochemical properties">
    <kinetics>
        <KM evidence="6">0.18 mM for coniferin</KM>
        <KM evidence="6">0.29 mM for syringin</KM>
        <KM evidence="6">2.3 mM for 4-methylumbelliferyl p-glucoside</KM>
        <KM evidence="6">1.9 mM for 4-nitrophenyl P-glucoside</KM>
    </kinetics>
    <phDependence>
        <text evidence="6">Optimum pH is 5.4-5.9.</text>
    </phDependence>
</comment>
<comment type="subunit">
    <text evidence="6">Homodimer.</text>
</comment>
<comment type="PTM">
    <text evidence="6">Glycosylated.</text>
</comment>
<comment type="similarity">
    <text evidence="7">Belongs to the glycosyl hydrolase 1 family.</text>
</comment>
<dbReference type="EC" id="3.2.1.126" evidence="5 6"/>
<dbReference type="EMBL" id="AF072736">
    <property type="protein sequence ID" value="AAC69619.1"/>
    <property type="molecule type" value="mRNA"/>
</dbReference>
<dbReference type="SMR" id="Q9ZT64"/>
<dbReference type="CAZy" id="GH1">
    <property type="family name" value="Glycoside Hydrolase Family 1"/>
</dbReference>
<dbReference type="GO" id="GO:0047782">
    <property type="term" value="F:coniferin beta-glucosidase activity"/>
    <property type="evidence" value="ECO:0000314"/>
    <property type="project" value="UniProtKB"/>
</dbReference>
<dbReference type="GO" id="GO:0042802">
    <property type="term" value="F:identical protein binding"/>
    <property type="evidence" value="ECO:0000314"/>
    <property type="project" value="UniProtKB"/>
</dbReference>
<dbReference type="GO" id="GO:0005975">
    <property type="term" value="P:carbohydrate metabolic process"/>
    <property type="evidence" value="ECO:0007669"/>
    <property type="project" value="InterPro"/>
</dbReference>
<dbReference type="GO" id="GO:0009809">
    <property type="term" value="P:lignin biosynthetic process"/>
    <property type="evidence" value="ECO:0000314"/>
    <property type="project" value="UniProtKB"/>
</dbReference>
<dbReference type="FunFam" id="3.20.20.80:FF:000020">
    <property type="entry name" value="Beta-glucosidase 12"/>
    <property type="match status" value="1"/>
</dbReference>
<dbReference type="Gene3D" id="3.20.20.80">
    <property type="entry name" value="Glycosidases"/>
    <property type="match status" value="1"/>
</dbReference>
<dbReference type="InterPro" id="IPR001360">
    <property type="entry name" value="Glyco_hydro_1"/>
</dbReference>
<dbReference type="InterPro" id="IPR033132">
    <property type="entry name" value="Glyco_hydro_1_N_CS"/>
</dbReference>
<dbReference type="InterPro" id="IPR017853">
    <property type="entry name" value="Glycoside_hydrolase_SF"/>
</dbReference>
<dbReference type="PANTHER" id="PTHR10353:SF236">
    <property type="entry name" value="BETA-GLUCOSIDASE 18"/>
    <property type="match status" value="1"/>
</dbReference>
<dbReference type="PANTHER" id="PTHR10353">
    <property type="entry name" value="GLYCOSYL HYDROLASE"/>
    <property type="match status" value="1"/>
</dbReference>
<dbReference type="Pfam" id="PF00232">
    <property type="entry name" value="Glyco_hydro_1"/>
    <property type="match status" value="1"/>
</dbReference>
<dbReference type="PRINTS" id="PR00131">
    <property type="entry name" value="GLHYDRLASE1"/>
</dbReference>
<dbReference type="SUPFAM" id="SSF51445">
    <property type="entry name" value="(Trans)glycosidases"/>
    <property type="match status" value="1"/>
</dbReference>
<dbReference type="PROSITE" id="PS00653">
    <property type="entry name" value="GLYCOSYL_HYDROL_F1_2"/>
    <property type="match status" value="1"/>
</dbReference>
<sequence>MEVSVLMWVLLFYSLLGFQVTTARLDRNNFPSDFMFGTASSAYQYEGAVREDGKGPSTWDALTHMPGRIKDSSNGDVAVDQYHRYMEDIELMASLGLDAYRFSISWSRILPEGRGEINMAGIEYYNNLIDALLQNGIQPFVTLFHFDLPKALEDSYGGWLSPQIINDFEAYAEICFRAFGDRVKYWATVNEPNLFVPLGYTVGIFPPTRCAAPHANPLCMTGNCSSAEPYLAAHHVLLAHASAVEKYREKYQKIQGGSIGLVISAPWYEPLENSPEERSAVDRILSFNLRWFLDPIVFGDYPQEMRERLGSRLPSISSELSAKLRGSFDYMGINHYTTLYATSTPPLSPDHTQYLYPDSRVYLTGERHGVSIGERTGMDGLFVVPHGIQKIVEYVKEFYDNPTIIIAENGYPESEESSSTLQENLNDVRRIRFHGDCLSYLSAAIKNGSDVRGYFVWSLLDNFEWAFGYTIRFGLYHVDFISDQKRYPKLSAQWFRQFLQHDDQGSIRSSSSI</sequence>
<feature type="signal peptide" evidence="6">
    <location>
        <begin position="1"/>
        <end position="23"/>
    </location>
</feature>
<feature type="chain" id="PRO_0000418448" description="Coniferin beta-glucosidase">
    <location>
        <begin position="24"/>
        <end position="513"/>
    </location>
</feature>
<feature type="active site" description="Proton donor" evidence="2">
    <location>
        <position position="191"/>
    </location>
</feature>
<feature type="active site" description="Nucleophile" evidence="2">
    <location>
        <position position="408"/>
    </location>
</feature>
<feature type="binding site" evidence="2">
    <location>
        <position position="44"/>
    </location>
    <ligand>
        <name>a beta-D-glucoside</name>
        <dbReference type="ChEBI" id="CHEBI:22798"/>
    </ligand>
</feature>
<feature type="binding site" evidence="2">
    <location>
        <position position="145"/>
    </location>
    <ligand>
        <name>a beta-D-glucoside</name>
        <dbReference type="ChEBI" id="CHEBI:22798"/>
    </ligand>
</feature>
<feature type="binding site" evidence="2">
    <location>
        <begin position="190"/>
        <end position="191"/>
    </location>
    <ligand>
        <name>a beta-D-glucoside</name>
        <dbReference type="ChEBI" id="CHEBI:22798"/>
    </ligand>
</feature>
<feature type="binding site" evidence="2">
    <location>
        <position position="336"/>
    </location>
    <ligand>
        <name>a beta-D-glucoside</name>
        <dbReference type="ChEBI" id="CHEBI:22798"/>
    </ligand>
</feature>
<feature type="binding site" evidence="3">
    <location>
        <position position="408"/>
    </location>
    <ligand>
        <name>a beta-D-glucoside</name>
        <dbReference type="ChEBI" id="CHEBI:22798"/>
    </ligand>
</feature>
<feature type="binding site" evidence="2">
    <location>
        <position position="457"/>
    </location>
    <ligand>
        <name>a beta-D-glucoside</name>
        <dbReference type="ChEBI" id="CHEBI:22798"/>
    </ligand>
</feature>
<feature type="binding site" evidence="2">
    <location>
        <begin position="464"/>
        <end position="465"/>
    </location>
    <ligand>
        <name>a beta-D-glucoside</name>
        <dbReference type="ChEBI" id="CHEBI:22798"/>
    </ligand>
</feature>
<feature type="binding site" evidence="1">
    <location>
        <position position="473"/>
    </location>
    <ligand>
        <name>a beta-D-glucoside</name>
        <dbReference type="ChEBI" id="CHEBI:22798"/>
    </ligand>
</feature>
<feature type="glycosylation site" description="N-linked (GlcNAc...) asparagine" evidence="4">
    <location>
        <position position="223"/>
    </location>
</feature>
<feature type="glycosylation site" description="N-linked (GlcNAc...) asparagine" evidence="4">
    <location>
        <position position="447"/>
    </location>
</feature>
<feature type="disulfide bond" evidence="2">
    <location>
        <begin position="210"/>
        <end position="219"/>
    </location>
</feature>
<feature type="sequence conflict" description="In Ref. 2; AA sequence." evidence="7" ref="2">
    <original>M</original>
    <variation>T</variation>
    <location>
        <position position="35"/>
    </location>
</feature>
<protein>
    <recommendedName>
        <fullName>Coniferin beta-glucosidase</fullName>
        <ecNumber evidence="5 6">3.2.1.126</ecNumber>
    </recommendedName>
</protein>
<organism>
    <name type="scientific">Pinus contorta</name>
    <name type="common">Shore pine</name>
    <name type="synonym">Lodgepole pine</name>
    <dbReference type="NCBI Taxonomy" id="3339"/>
    <lineage>
        <taxon>Eukaryota</taxon>
        <taxon>Viridiplantae</taxon>
        <taxon>Streptophyta</taxon>
        <taxon>Embryophyta</taxon>
        <taxon>Tracheophyta</taxon>
        <taxon>Spermatophyta</taxon>
        <taxon>Pinopsida</taxon>
        <taxon>Pinidae</taxon>
        <taxon>Conifers I</taxon>
        <taxon>Pinales</taxon>
        <taxon>Pinaceae</taxon>
        <taxon>Pinus</taxon>
        <taxon>Pinus subgen. Pinus</taxon>
    </lineage>
</organism>
<accession>Q9ZT64</accession>
<evidence type="ECO:0000250" key="1">
    <source>
        <dbReference type="UniProtKB" id="Q1XH05"/>
    </source>
</evidence>
<evidence type="ECO:0000250" key="2">
    <source>
        <dbReference type="UniProtKB" id="Q7XSK0"/>
    </source>
</evidence>
<evidence type="ECO:0000250" key="3">
    <source>
        <dbReference type="UniProtKB" id="Q9SPP9"/>
    </source>
</evidence>
<evidence type="ECO:0000255" key="4">
    <source>
        <dbReference type="PROSITE-ProRule" id="PRU00498"/>
    </source>
</evidence>
<evidence type="ECO:0000269" key="5">
    <source>
    </source>
</evidence>
<evidence type="ECO:0000269" key="6">
    <source>
    </source>
</evidence>
<evidence type="ECO:0000305" key="7"/>
<name>CBG_PINCO</name>
<reference key="1">
    <citation type="journal article" date="1999" name="Plant Mol. Biol.">
        <title>cDNA cloning and heterologous expression of coniferin beta-glucosidase.</title>
        <authorList>
            <person name="Dharmawardhana D.P."/>
            <person name="Ellis B.E."/>
            <person name="Carlson J.E."/>
        </authorList>
    </citation>
    <scope>NUCLEOTIDE SEQUENCE [MRNA]</scope>
    <scope>CATALYTIC ACTIVITY</scope>
</reference>
<reference key="2">
    <citation type="journal article" date="1995" name="Plant Physiol.">
        <title>A beta-glucosidase from lodgepole pine xylem specific for the lignin precursor coniferin.</title>
        <authorList>
            <person name="Dharmawardhana D.P."/>
            <person name="Ellis B.E."/>
            <person name="Carlson J.E."/>
        </authorList>
    </citation>
    <scope>PROTEIN SEQUENCE OF 24-40</scope>
    <scope>SUBUNIT</scope>
    <scope>CATALYTIC ACTIVITY</scope>
    <scope>SUBSTRATE SPECIFICITY</scope>
    <scope>BIOPHYSICOCHEMICAL PROPERTIES</scope>
    <scope>ACTIVITY REGULATION</scope>
    <scope>GLYCOSYLATION</scope>
</reference>
<proteinExistence type="evidence at protein level"/>